<dbReference type="EC" id="2.1.1.174" evidence="1"/>
<dbReference type="EMBL" id="CP000469">
    <property type="protein sequence ID" value="ABK47167.1"/>
    <property type="molecule type" value="Genomic_DNA"/>
</dbReference>
<dbReference type="RefSeq" id="WP_011716061.1">
    <property type="nucleotide sequence ID" value="NC_008577.1"/>
</dbReference>
<dbReference type="SMR" id="A0KTP8"/>
<dbReference type="STRING" id="94122.Shewana3_0932"/>
<dbReference type="KEGG" id="shn:Shewana3_0932"/>
<dbReference type="eggNOG" id="COG2813">
    <property type="taxonomic scope" value="Bacteria"/>
</dbReference>
<dbReference type="HOGENOM" id="CLU_040288_4_0_6"/>
<dbReference type="OrthoDB" id="29650at2"/>
<dbReference type="Proteomes" id="UP000002589">
    <property type="component" value="Chromosome"/>
</dbReference>
<dbReference type="GO" id="GO:0005737">
    <property type="term" value="C:cytoplasm"/>
    <property type="evidence" value="ECO:0007669"/>
    <property type="project" value="UniProtKB-SubCell"/>
</dbReference>
<dbReference type="GO" id="GO:0052916">
    <property type="term" value="F:23S rRNA (guanine(1835)-N(2))-methyltransferase activity"/>
    <property type="evidence" value="ECO:0007669"/>
    <property type="project" value="UniProtKB-EC"/>
</dbReference>
<dbReference type="GO" id="GO:0003676">
    <property type="term" value="F:nucleic acid binding"/>
    <property type="evidence" value="ECO:0007669"/>
    <property type="project" value="InterPro"/>
</dbReference>
<dbReference type="CDD" id="cd02440">
    <property type="entry name" value="AdoMet_MTases"/>
    <property type="match status" value="1"/>
</dbReference>
<dbReference type="Gene3D" id="3.40.50.150">
    <property type="entry name" value="Vaccinia Virus protein VP39"/>
    <property type="match status" value="2"/>
</dbReference>
<dbReference type="HAMAP" id="MF_01859">
    <property type="entry name" value="23SrRNA_methyltr_G"/>
    <property type="match status" value="1"/>
</dbReference>
<dbReference type="InterPro" id="IPR002052">
    <property type="entry name" value="DNA_methylase_N6_adenine_CS"/>
</dbReference>
<dbReference type="InterPro" id="IPR017237">
    <property type="entry name" value="rRNA_m2G-MeTrfase_RlmG"/>
</dbReference>
<dbReference type="InterPro" id="IPR046977">
    <property type="entry name" value="RsmC/RlmG"/>
</dbReference>
<dbReference type="InterPro" id="IPR029063">
    <property type="entry name" value="SAM-dependent_MTases_sf"/>
</dbReference>
<dbReference type="InterPro" id="IPR007848">
    <property type="entry name" value="Small_mtfrase_dom"/>
</dbReference>
<dbReference type="PANTHER" id="PTHR47816:SF5">
    <property type="entry name" value="RIBOSOMAL RNA LARGE SUBUNIT METHYLTRANSFERASE G"/>
    <property type="match status" value="1"/>
</dbReference>
<dbReference type="PANTHER" id="PTHR47816">
    <property type="entry name" value="RIBOSOMAL RNA SMALL SUBUNIT METHYLTRANSFERASE C"/>
    <property type="match status" value="1"/>
</dbReference>
<dbReference type="Pfam" id="PF05175">
    <property type="entry name" value="MTS"/>
    <property type="match status" value="1"/>
</dbReference>
<dbReference type="PIRSF" id="PIRSF037565">
    <property type="entry name" value="RRNA_m2G_Mtase_RsmD_prd"/>
    <property type="match status" value="1"/>
</dbReference>
<dbReference type="SUPFAM" id="SSF53335">
    <property type="entry name" value="S-adenosyl-L-methionine-dependent methyltransferases"/>
    <property type="match status" value="1"/>
</dbReference>
<reference key="1">
    <citation type="submission" date="2006-09" db="EMBL/GenBank/DDBJ databases">
        <title>Complete sequence of chromosome 1 of Shewanella sp. ANA-3.</title>
        <authorList>
            <person name="Copeland A."/>
            <person name="Lucas S."/>
            <person name="Lapidus A."/>
            <person name="Barry K."/>
            <person name="Detter J.C."/>
            <person name="Glavina del Rio T."/>
            <person name="Hammon N."/>
            <person name="Israni S."/>
            <person name="Dalin E."/>
            <person name="Tice H."/>
            <person name="Pitluck S."/>
            <person name="Chertkov O."/>
            <person name="Brettin T."/>
            <person name="Bruce D."/>
            <person name="Han C."/>
            <person name="Tapia R."/>
            <person name="Gilna P."/>
            <person name="Schmutz J."/>
            <person name="Larimer F."/>
            <person name="Land M."/>
            <person name="Hauser L."/>
            <person name="Kyrpides N."/>
            <person name="Kim E."/>
            <person name="Newman D."/>
            <person name="Salticov C."/>
            <person name="Konstantinidis K."/>
            <person name="Klappenback J."/>
            <person name="Tiedje J."/>
            <person name="Richardson P."/>
        </authorList>
    </citation>
    <scope>NUCLEOTIDE SEQUENCE [LARGE SCALE GENOMIC DNA]</scope>
    <source>
        <strain>ANA-3</strain>
    </source>
</reference>
<evidence type="ECO:0000255" key="1">
    <source>
        <dbReference type="HAMAP-Rule" id="MF_01859"/>
    </source>
</evidence>
<accession>A0KTP8</accession>
<protein>
    <recommendedName>
        <fullName evidence="1">Ribosomal RNA large subunit methyltransferase G</fullName>
        <ecNumber evidence="1">2.1.1.174</ecNumber>
    </recommendedName>
    <alternativeName>
        <fullName evidence="1">23S rRNA m2G1835 methyltransferase</fullName>
    </alternativeName>
    <alternativeName>
        <fullName evidence="1">rRNA (guanine-N(2)-)-methyltransferase RlmG</fullName>
    </alternativeName>
</protein>
<proteinExistence type="inferred from homology"/>
<keyword id="KW-0963">Cytoplasm</keyword>
<keyword id="KW-0489">Methyltransferase</keyword>
<keyword id="KW-0698">rRNA processing</keyword>
<keyword id="KW-0949">S-adenosyl-L-methionine</keyword>
<keyword id="KW-0808">Transferase</keyword>
<sequence>MTTQFSVAGIELELFRYPASQESNLQAWDAADEHLINTLVEGGQTAVPTAIINDSFGALSCALSRLNPDWPLNVETDARTSFLGAEQNHHRNQLPMDNLTRFTSRDALPCDLALVLMKLPKNLTYFAHQLMRLSQVLPAGCKVLVGAKAKSINASLLEVFATHLGPASASLAWKKTRVITCISDGKPRALPKEVTWDIPEFNLHISNLSNVFAANKLDIGARIMLDNLPQGDFKTIVDLGCGNGVLGLRAAQLYPNADIHFIDDSEMAVASAKANWANNQLPAEKGHFHWDDCMTHLPDGVEPDLVLCNPPFHQGEAITDHIAWQMFLDARRRLKNGGILHIVGNRHLAYHVKLQRLFKNCTTVASNGKFVILQAQK</sequence>
<feature type="chain" id="PRO_0000366516" description="Ribosomal RNA large subunit methyltransferase G">
    <location>
        <begin position="1"/>
        <end position="377"/>
    </location>
</feature>
<comment type="function">
    <text evidence="1">Specifically methylates the guanine in position 1835 (m2G1835) of 23S rRNA.</text>
</comment>
<comment type="catalytic activity">
    <reaction evidence="1">
        <text>guanosine(1835) in 23S rRNA + S-adenosyl-L-methionine = N(2)-methylguanosine(1835) in 23S rRNA + S-adenosyl-L-homocysteine + H(+)</text>
        <dbReference type="Rhea" id="RHEA:42744"/>
        <dbReference type="Rhea" id="RHEA-COMP:10217"/>
        <dbReference type="Rhea" id="RHEA-COMP:10218"/>
        <dbReference type="ChEBI" id="CHEBI:15378"/>
        <dbReference type="ChEBI" id="CHEBI:57856"/>
        <dbReference type="ChEBI" id="CHEBI:59789"/>
        <dbReference type="ChEBI" id="CHEBI:74269"/>
        <dbReference type="ChEBI" id="CHEBI:74481"/>
        <dbReference type="EC" id="2.1.1.174"/>
    </reaction>
</comment>
<comment type="subcellular location">
    <subcellularLocation>
        <location evidence="1">Cytoplasm</location>
    </subcellularLocation>
</comment>
<comment type="similarity">
    <text evidence="1">Belongs to the methyltransferase superfamily. RlmG family.</text>
</comment>
<organism>
    <name type="scientific">Shewanella sp. (strain ANA-3)</name>
    <dbReference type="NCBI Taxonomy" id="94122"/>
    <lineage>
        <taxon>Bacteria</taxon>
        <taxon>Pseudomonadati</taxon>
        <taxon>Pseudomonadota</taxon>
        <taxon>Gammaproteobacteria</taxon>
        <taxon>Alteromonadales</taxon>
        <taxon>Shewanellaceae</taxon>
        <taxon>Shewanella</taxon>
    </lineage>
</organism>
<gene>
    <name evidence="1" type="primary">rlmG</name>
    <name type="ordered locus">Shewana3_0932</name>
</gene>
<name>RLMG_SHESA</name>